<keyword id="KW-0002">3D-structure</keyword>
<keyword id="KW-0150">Chloroplast</keyword>
<keyword id="KW-0903">Direct protein sequencing</keyword>
<keyword id="KW-0934">Plastid</keyword>
<keyword id="KW-1185">Reference proteome</keyword>
<keyword id="KW-0687">Ribonucleoprotein</keyword>
<keyword id="KW-0689">Ribosomal protein</keyword>
<keyword id="KW-0694">RNA-binding</keyword>
<keyword id="KW-0699">rRNA-binding</keyword>
<dbReference type="EMBL" id="AJ400848">
    <property type="protein sequence ID" value="CAB91049.1"/>
    <property type="molecule type" value="Genomic_DNA"/>
</dbReference>
<dbReference type="EMBL" id="X13336">
    <property type="protein sequence ID" value="CAA31713.2"/>
    <property type="molecule type" value="Genomic_DNA"/>
</dbReference>
<dbReference type="PIR" id="S05256">
    <property type="entry name" value="R3SP19"/>
</dbReference>
<dbReference type="RefSeq" id="NP_077750.1">
    <property type="nucleotide sequence ID" value="NC_002202.1"/>
</dbReference>
<dbReference type="PDB" id="4V61">
    <property type="method" value="EM"/>
    <property type="resolution" value="9.40 A"/>
    <property type="chains" value="AS=1-92"/>
</dbReference>
<dbReference type="PDB" id="5MMJ">
    <property type="method" value="EM"/>
    <property type="resolution" value="3.65 A"/>
    <property type="chains" value="s=1-92"/>
</dbReference>
<dbReference type="PDB" id="5MMM">
    <property type="method" value="EM"/>
    <property type="resolution" value="3.40 A"/>
    <property type="chains" value="s=1-92"/>
</dbReference>
<dbReference type="PDB" id="5X8P">
    <property type="method" value="EM"/>
    <property type="resolution" value="3.40 A"/>
    <property type="chains" value="s=1-92"/>
</dbReference>
<dbReference type="PDB" id="5X8R">
    <property type="method" value="EM"/>
    <property type="resolution" value="3.70 A"/>
    <property type="chains" value="s=1-92"/>
</dbReference>
<dbReference type="PDB" id="6ERI">
    <property type="method" value="EM"/>
    <property type="resolution" value="3.00 A"/>
    <property type="chains" value="BS=5-85"/>
</dbReference>
<dbReference type="PDBsum" id="4V61"/>
<dbReference type="PDBsum" id="5MMJ"/>
<dbReference type="PDBsum" id="5MMM"/>
<dbReference type="PDBsum" id="5X8P"/>
<dbReference type="PDBsum" id="5X8R"/>
<dbReference type="PDBsum" id="6ERI"/>
<dbReference type="EMDB" id="EMD-3532"/>
<dbReference type="EMDB" id="EMD-3533"/>
<dbReference type="EMDB" id="EMD-3941"/>
<dbReference type="EMDB" id="EMD-6709"/>
<dbReference type="EMDB" id="EMD-6710"/>
<dbReference type="SMR" id="P06508"/>
<dbReference type="FunCoup" id="P06508">
    <property type="interactions" value="56"/>
</dbReference>
<dbReference type="STRING" id="3562.P06508"/>
<dbReference type="GeneID" id="2715642"/>
<dbReference type="KEGG" id="soe:2715642"/>
<dbReference type="InParanoid" id="P06508"/>
<dbReference type="OrthoDB" id="2043at2759"/>
<dbReference type="Proteomes" id="UP001155700">
    <property type="component" value="Chloroplast Pltd"/>
</dbReference>
<dbReference type="GO" id="GO:0009507">
    <property type="term" value="C:chloroplast"/>
    <property type="evidence" value="ECO:0007669"/>
    <property type="project" value="UniProtKB-SubCell"/>
</dbReference>
<dbReference type="GO" id="GO:0005763">
    <property type="term" value="C:mitochondrial small ribosomal subunit"/>
    <property type="evidence" value="ECO:0000318"/>
    <property type="project" value="GO_Central"/>
</dbReference>
<dbReference type="GO" id="GO:0019843">
    <property type="term" value="F:rRNA binding"/>
    <property type="evidence" value="ECO:0007669"/>
    <property type="project" value="UniProtKB-UniRule"/>
</dbReference>
<dbReference type="GO" id="GO:0003735">
    <property type="term" value="F:structural constituent of ribosome"/>
    <property type="evidence" value="ECO:0000318"/>
    <property type="project" value="GO_Central"/>
</dbReference>
<dbReference type="GO" id="GO:0000028">
    <property type="term" value="P:ribosomal small subunit assembly"/>
    <property type="evidence" value="ECO:0000318"/>
    <property type="project" value="GO_Central"/>
</dbReference>
<dbReference type="GO" id="GO:0006412">
    <property type="term" value="P:translation"/>
    <property type="evidence" value="ECO:0007669"/>
    <property type="project" value="UniProtKB-UniRule"/>
</dbReference>
<dbReference type="FunFam" id="3.30.860.10:FF:000001">
    <property type="entry name" value="30S ribosomal protein S19"/>
    <property type="match status" value="1"/>
</dbReference>
<dbReference type="Gene3D" id="3.30.860.10">
    <property type="entry name" value="30s Ribosomal Protein S19, Chain A"/>
    <property type="match status" value="1"/>
</dbReference>
<dbReference type="HAMAP" id="MF_00531">
    <property type="entry name" value="Ribosomal_uS19"/>
    <property type="match status" value="1"/>
</dbReference>
<dbReference type="InterPro" id="IPR002222">
    <property type="entry name" value="Ribosomal_uS19"/>
</dbReference>
<dbReference type="InterPro" id="IPR005732">
    <property type="entry name" value="Ribosomal_uS19_bac-type"/>
</dbReference>
<dbReference type="InterPro" id="IPR020934">
    <property type="entry name" value="Ribosomal_uS19_CS"/>
</dbReference>
<dbReference type="InterPro" id="IPR023575">
    <property type="entry name" value="Ribosomal_uS19_SF"/>
</dbReference>
<dbReference type="NCBIfam" id="TIGR01050">
    <property type="entry name" value="rpsS_bact"/>
    <property type="match status" value="1"/>
</dbReference>
<dbReference type="PANTHER" id="PTHR11880">
    <property type="entry name" value="RIBOSOMAL PROTEIN S19P FAMILY MEMBER"/>
    <property type="match status" value="1"/>
</dbReference>
<dbReference type="PANTHER" id="PTHR11880:SF8">
    <property type="entry name" value="SMALL RIBOSOMAL SUBUNIT PROTEIN US19M"/>
    <property type="match status" value="1"/>
</dbReference>
<dbReference type="Pfam" id="PF00203">
    <property type="entry name" value="Ribosomal_S19"/>
    <property type="match status" value="1"/>
</dbReference>
<dbReference type="PIRSF" id="PIRSF002144">
    <property type="entry name" value="Ribosomal_S19"/>
    <property type="match status" value="1"/>
</dbReference>
<dbReference type="PRINTS" id="PR00975">
    <property type="entry name" value="RIBOSOMALS19"/>
</dbReference>
<dbReference type="SUPFAM" id="SSF54570">
    <property type="entry name" value="Ribosomal protein S19"/>
    <property type="match status" value="1"/>
</dbReference>
<dbReference type="PROSITE" id="PS00323">
    <property type="entry name" value="RIBOSOMAL_S19"/>
    <property type="match status" value="1"/>
</dbReference>
<feature type="initiator methionine" description="Removed" evidence="1 2">
    <location>
        <position position="1"/>
    </location>
</feature>
<feature type="chain" id="PRO_0000129994" description="Small ribosomal subunit protein uS19c">
    <location>
        <begin position="2"/>
        <end position="92"/>
    </location>
</feature>
<geneLocation type="chloroplast"/>
<proteinExistence type="evidence at protein level"/>
<organism>
    <name type="scientific">Spinacia oleracea</name>
    <name type="common">Spinach</name>
    <dbReference type="NCBI Taxonomy" id="3562"/>
    <lineage>
        <taxon>Eukaryota</taxon>
        <taxon>Viridiplantae</taxon>
        <taxon>Streptophyta</taxon>
        <taxon>Embryophyta</taxon>
        <taxon>Tracheophyta</taxon>
        <taxon>Spermatophyta</taxon>
        <taxon>Magnoliopsida</taxon>
        <taxon>eudicotyledons</taxon>
        <taxon>Gunneridae</taxon>
        <taxon>Pentapetalae</taxon>
        <taxon>Caryophyllales</taxon>
        <taxon>Chenopodiaceae</taxon>
        <taxon>Chenopodioideae</taxon>
        <taxon>Anserineae</taxon>
        <taxon>Spinacia</taxon>
    </lineage>
</organism>
<accession>P06508</accession>
<accession>P82541</accession>
<comment type="function">
    <text evidence="7 8">Component of the chloroplast ribosome (chloro-ribosome), a dedicated translation machinery responsible for the synthesis of chloroplast genome-encoded proteins, including proteins of the transcription and translation machinery and components of the photosynthetic apparatus.</text>
</comment>
<comment type="subunit">
    <text evidence="1 3">Component of the chloroplast small ribosomal subunit (SSU). Mature 70S chloroplast ribosomes of higher plants consist of a small (30S) and a large (50S) subunit. The 30S small subunit contains 1 molecule of ribosomal RNA (16S rRNA) and 24 different proteins. The 50S large subunit contains 3 rRNA molecules (23S, 5S and 4.5S rRNA) and 33 different proteins (PubMed:10874039, PubMed:28007896). uS19c binds directly to 16S ribosomal RNA (PubMed:10874039).</text>
</comment>
<comment type="subcellular location">
    <subcellularLocation>
        <location evidence="1 3">Plastid</location>
        <location evidence="1 3">Chloroplast</location>
    </subcellularLocation>
</comment>
<comment type="mass spectrometry"/>
<comment type="mass spectrometry"/>
<comment type="miscellaneous">
    <text evidence="1">S19 alpha and beta forms differ in pI. S19 beta form is the minor least basic form.</text>
</comment>
<comment type="similarity">
    <text evidence="6">Belongs to the universal ribosomal protein uS19 family.</text>
</comment>
<protein>
    <recommendedName>
        <fullName evidence="5">Small ribosomal subunit protein uS19c</fullName>
    </recommendedName>
    <alternativeName>
        <fullName evidence="4">30S ribosomal protein S19, chloroplastic</fullName>
    </alternativeName>
    <alternativeName>
        <fullName>CS-S23</fullName>
    </alternativeName>
</protein>
<sequence>MTRSLKKNPFVANHLLRKIEKLNKKAEKEIIVTWSRASTIIPTMIGHTIAIHNGREHLPIYITDRMVGHKLGEFAPTLNFRGHAKNDNKSRR</sequence>
<reference key="1">
    <citation type="journal article" date="1984" name="Nucleic Acids Res.">
        <title>Junctions of the large single copy region and the inverted repeats in Spinacia oleracea and Nicotiana debneyi chloroplast DNA: sequence of the genes for tRNAHis and the ribosomal proteins S19 and L2.</title>
        <authorList>
            <person name="Zurawski G."/>
            <person name="Bottomley W."/>
            <person name="Whitfeld P.R."/>
        </authorList>
    </citation>
    <scope>NUCLEOTIDE SEQUENCE [GENOMIC DNA]</scope>
</reference>
<reference key="2">
    <citation type="journal article" date="1989" name="Mol. Gen. Genet.">
        <title>Cotranscription of the S10- and spc-like operons in spinach chloroplasts and identification of three of their gene products.</title>
        <authorList>
            <person name="Zhou D.X."/>
            <person name="Quigley F."/>
            <person name="Massenet O."/>
            <person name="Mache R."/>
        </authorList>
    </citation>
    <scope>NUCLEOTIDE SEQUENCE [GENOMIC DNA]</scope>
</reference>
<reference key="3">
    <citation type="journal article" date="2001" name="Plant Mol. Biol.">
        <title>The plastid chromosome of spinach (Spinacia oleracea): complete nucleotide sequence and gene organization.</title>
        <authorList>
            <person name="Schmitz-Linneweber C."/>
            <person name="Maier R.M."/>
            <person name="Alcaraz J.-P."/>
            <person name="Cottet A."/>
            <person name="Herrmann R.G."/>
            <person name="Mache R."/>
        </authorList>
    </citation>
    <scope>NUCLEOTIDE SEQUENCE [LARGE SCALE GENOMIC DNA]</scope>
    <source>
        <strain>cv. Geant d'hiver</strain>
        <strain>cv. Monatol</strain>
    </source>
</reference>
<reference key="4">
    <citation type="journal article" date="1992" name="Plant Mol. Biol.">
        <title>Purification and characterization of seven chloroplast ribosomal proteins: evidence that organelle ribosomal protein genes are functional and that NH2-terminal processing occurs via multiple pathways in chloroplasts.</title>
        <authorList>
            <person name="Schmidt J."/>
            <person name="Herfurth E."/>
            <person name="Subramanian A.R."/>
        </authorList>
    </citation>
    <scope>PROTEIN SEQUENCE OF 2-32</scope>
    <source>
        <strain>cv. Alwaro</strain>
    </source>
</reference>
<reference key="5">
    <citation type="journal article" date="2000" name="J. Biol. Chem.">
        <title>The plastid ribosomal proteins. Identification of all the proteins in the 30S subunit of an organelle ribosome (chloroplast).</title>
        <authorList>
            <person name="Yamaguchi K."/>
            <person name="von Knoblauch K."/>
            <person name="Subramanian A.R."/>
        </authorList>
    </citation>
    <scope>PROTEIN SEQUENCE OF 2-7</scope>
    <scope>FUNCTION</scope>
    <scope>SUBUNIT</scope>
    <scope>SUBCELLULAR LOCATION</scope>
    <scope>MASS SPECTROMETRY</scope>
    <source>
        <strain>cv. Alwaro</strain>
        <tissue>Leaf</tissue>
    </source>
</reference>
<reference key="6">
    <citation type="journal article" date="2007" name="Proc. Natl. Acad. Sci. U.S.A.">
        <title>Cryo-EM study of the spinach chloroplast ribosome reveals the structural and functional roles of plastid-specific ribosomal proteins.</title>
        <authorList>
            <person name="Sharma M.R."/>
            <person name="Wilson D.N."/>
            <person name="Datta P.P."/>
            <person name="Barat C."/>
            <person name="Schluenzen F."/>
            <person name="Fucini P."/>
            <person name="Agrawal R.K."/>
        </authorList>
    </citation>
    <scope>STRUCTURE BY ELECTRON MICROSCOPY (9.4 ANGSTROMS)</scope>
</reference>
<reference key="7">
    <citation type="journal article" date="2017" name="EMBO J.">
        <title>The complete structure of the chloroplast 70S ribosome in complex with translation factor pY.</title>
        <authorList>
            <person name="Bieri P."/>
            <person name="Leibundgut M."/>
            <person name="Saurer M."/>
            <person name="Boehringer D."/>
            <person name="Ban N."/>
        </authorList>
    </citation>
    <scope>STRUCTURE BY ELECTRON MICROSCOPY (3.40 ANGSTROMS)</scope>
    <scope>SUBUNIT</scope>
    <scope>SUBCELLULAR LOCATION</scope>
</reference>
<evidence type="ECO:0000269" key="1">
    <source>
    </source>
</evidence>
<evidence type="ECO:0000269" key="2">
    <source>
    </source>
</evidence>
<evidence type="ECO:0000269" key="3">
    <source>
    </source>
</evidence>
<evidence type="ECO:0000303" key="4">
    <source>
    </source>
</evidence>
<evidence type="ECO:0000303" key="5">
    <source>
    </source>
</evidence>
<evidence type="ECO:0000305" key="6"/>
<evidence type="ECO:0000305" key="7">
    <source>
    </source>
</evidence>
<evidence type="ECO:0000305" key="8">
    <source>
    </source>
</evidence>
<gene>
    <name type="primary">rps19</name>
</gene>
<name>RR19_SPIOL</name>